<dbReference type="EMBL" id="CU928161">
    <property type="protein sequence ID" value="CAR03461.1"/>
    <property type="molecule type" value="Genomic_DNA"/>
</dbReference>
<dbReference type="RefSeq" id="WP_000667561.1">
    <property type="nucleotide sequence ID" value="NC_011742.1"/>
</dbReference>
<dbReference type="SMR" id="B7ME88"/>
<dbReference type="KEGG" id="ecz:ECS88_2175"/>
<dbReference type="HOGENOM" id="CLU_002755_1_2_6"/>
<dbReference type="Proteomes" id="UP000000747">
    <property type="component" value="Chromosome"/>
</dbReference>
<dbReference type="GO" id="GO:0005886">
    <property type="term" value="C:plasma membrane"/>
    <property type="evidence" value="ECO:0007669"/>
    <property type="project" value="UniProtKB-SubCell"/>
</dbReference>
<dbReference type="GO" id="GO:0042910">
    <property type="term" value="F:xenobiotic transmembrane transporter activity"/>
    <property type="evidence" value="ECO:0007669"/>
    <property type="project" value="TreeGrafter"/>
</dbReference>
<dbReference type="FunFam" id="1.20.1640.10:FF:000001">
    <property type="entry name" value="Efflux pump membrane transporter"/>
    <property type="match status" value="1"/>
</dbReference>
<dbReference type="FunFam" id="3.30.70.1430:FF:000001">
    <property type="entry name" value="Efflux pump membrane transporter"/>
    <property type="match status" value="1"/>
</dbReference>
<dbReference type="FunFam" id="3.30.2090.10:FF:000004">
    <property type="entry name" value="Multidrug resistance protein MdtC"/>
    <property type="match status" value="1"/>
</dbReference>
<dbReference type="FunFam" id="3.30.2090.10:FF:000005">
    <property type="entry name" value="Multidrug resistance protein MdtC"/>
    <property type="match status" value="1"/>
</dbReference>
<dbReference type="FunFam" id="3.30.70.1430:FF:000004">
    <property type="entry name" value="Multidrug resistance protein MdtC"/>
    <property type="match status" value="1"/>
</dbReference>
<dbReference type="Gene3D" id="3.30.70.1430">
    <property type="entry name" value="Multidrug efflux transporter AcrB pore domain"/>
    <property type="match status" value="2"/>
</dbReference>
<dbReference type="Gene3D" id="3.30.70.1440">
    <property type="entry name" value="Multidrug efflux transporter AcrB pore domain"/>
    <property type="match status" value="1"/>
</dbReference>
<dbReference type="Gene3D" id="3.30.70.1320">
    <property type="entry name" value="Multidrug efflux transporter AcrB pore domain like"/>
    <property type="match status" value="1"/>
</dbReference>
<dbReference type="Gene3D" id="3.30.2090.10">
    <property type="entry name" value="Multidrug efflux transporter AcrB TolC docking domain, DN and DC subdomains"/>
    <property type="match status" value="2"/>
</dbReference>
<dbReference type="Gene3D" id="1.20.1640.10">
    <property type="entry name" value="Multidrug efflux transporter AcrB transmembrane domain"/>
    <property type="match status" value="2"/>
</dbReference>
<dbReference type="HAMAP" id="MF_01424">
    <property type="entry name" value="MdtC"/>
    <property type="match status" value="1"/>
</dbReference>
<dbReference type="InterPro" id="IPR027463">
    <property type="entry name" value="AcrB_DN_DC_subdom"/>
</dbReference>
<dbReference type="InterPro" id="IPR001036">
    <property type="entry name" value="Acrflvin-R"/>
</dbReference>
<dbReference type="InterPro" id="IPR023931">
    <property type="entry name" value="Multidrug-R_MdtC"/>
</dbReference>
<dbReference type="NCBIfam" id="NF007905">
    <property type="entry name" value="PRK10614.1"/>
    <property type="match status" value="1"/>
</dbReference>
<dbReference type="NCBIfam" id="NF033617">
    <property type="entry name" value="RND_permease_2"/>
    <property type="match status" value="1"/>
</dbReference>
<dbReference type="PANTHER" id="PTHR32063">
    <property type="match status" value="1"/>
</dbReference>
<dbReference type="PANTHER" id="PTHR32063:SF34">
    <property type="entry name" value="MULTIDRUG RESISTANCE PROTEIN MDTC"/>
    <property type="match status" value="1"/>
</dbReference>
<dbReference type="Pfam" id="PF00873">
    <property type="entry name" value="ACR_tran"/>
    <property type="match status" value="1"/>
</dbReference>
<dbReference type="PRINTS" id="PR00702">
    <property type="entry name" value="ACRIFLAVINRP"/>
</dbReference>
<dbReference type="SUPFAM" id="SSF82693">
    <property type="entry name" value="Multidrug efflux transporter AcrB pore domain, PN1, PN2, PC1 and PC2 subdomains"/>
    <property type="match status" value="4"/>
</dbReference>
<dbReference type="SUPFAM" id="SSF82714">
    <property type="entry name" value="Multidrug efflux transporter AcrB TolC docking domain, DN and DC subdomains"/>
    <property type="match status" value="2"/>
</dbReference>
<dbReference type="SUPFAM" id="SSF82866">
    <property type="entry name" value="Multidrug efflux transporter AcrB transmembrane domain"/>
    <property type="match status" value="2"/>
</dbReference>
<evidence type="ECO:0000255" key="1">
    <source>
        <dbReference type="HAMAP-Rule" id="MF_01424"/>
    </source>
</evidence>
<gene>
    <name evidence="1" type="primary">mdtC</name>
    <name type="ordered locus">ECS88_2175</name>
</gene>
<name>MDTC_ECO45</name>
<comment type="function">
    <text evidence="1">The MdtABC tripartite complex confers resistance against novobiocin and deoxycholate.</text>
</comment>
<comment type="subunit">
    <text evidence="1">Part of a tripartite efflux system composed of MdtA, MdtB and MdtC. MdtC forms a heteromultimer with MdtB.</text>
</comment>
<comment type="subcellular location">
    <subcellularLocation>
        <location evidence="1">Cell inner membrane</location>
        <topology evidence="1">Multi-pass membrane protein</topology>
    </subcellularLocation>
</comment>
<comment type="induction">
    <text>The mdtABC operon is transcriptionally activated by BaeR.</text>
</comment>
<comment type="similarity">
    <text evidence="1">Belongs to the resistance-nodulation-cell division (RND) (TC 2.A.6) family. MdtC subfamily.</text>
</comment>
<organism>
    <name type="scientific">Escherichia coli O45:K1 (strain S88 / ExPEC)</name>
    <dbReference type="NCBI Taxonomy" id="585035"/>
    <lineage>
        <taxon>Bacteria</taxon>
        <taxon>Pseudomonadati</taxon>
        <taxon>Pseudomonadota</taxon>
        <taxon>Gammaproteobacteria</taxon>
        <taxon>Enterobacterales</taxon>
        <taxon>Enterobacteriaceae</taxon>
        <taxon>Escherichia</taxon>
    </lineage>
</organism>
<sequence length="1025" mass="111000">MKFFALFIYRPVATILLSVAITLCGILGFRMLPVAPLPQVDFPVIMVSASLPGASPETMASSVATPLERSLGRIAGVSEMTSSSSLGSTRIILQFDFDRDINGAARDVQAAINAAQSLLPSGMPSRPTYRKANPSDAPIMILTLTSDTYSQGELYDFASTQLAPTISQIDGVGDVDVGGSSLPAVRVGLNPQALFNQGVSLDDVRTAISNANVRKPQGALEDGTHRWQIQTNDELKTAAEYQPLIIHYNNGGAVRLGDVATVTDSVQDVRNAGMTNAKPAILLMIRKLPEANIIQTVDSIRARLPELQSTIPAAIDLQIAQDRSPTIRASLEEVEQTLIISVALVILVVFLFLRSGRATIIPAVAVPVSLIGTFAAMYLCGFSLNNLSLMALTIATGFVVDDAIVVLENIARHLEAGMKPLQAALQGTREVGFTVLSMSLSLVAVFLPLLLMGGLPGRLLREFAVTLSVAIGISLLVSLTLTPMMCGWMLKASKPREQKRLRGFGRMLVALQQGYGKSLKWVLNHTRLVGVVLLGTIALNIWLYISIPKTFFPEQDTGVLMGGIQADQSISFQAMRGKLQDFMKIIRDDPAVDNVTGFTGGSRVNSGMMFITLKPRGERSETAQQIIDRLRKKLAKEPGANLFLMAVQDIRVGGRQANASYQYTLLSDDLAALREWEPKIRKKLATLPELADVNSDQEDNGAEMNLIYDRDTMARLGIDVQAANSLLNNAFGQRQISTIYQPMNQYKVVMEVDPRYTQDISALEKMFVINNEGKAIPLSYFAKWQPANAPLSVNHQGLSAASTISFNLPTGKSLSDASAAIDRAMTQLGVPSTVRGSFAGTAQVFQETMNSQVILIIAAIATVYIVLGILYESYVHPLTILSTLPSAGVGALLALQLFNAPFSLIALIGIMLLIGIVKKNAIMMVYFALEAQRHGNLTPQEAIFQACLLRFRPIMMTTLAALFGALPLVLSGGDGSELRQPLGITIVGGLVMSQLLTLYTTPVVYLFFDRLRLRFSRKPKQAVTE</sequence>
<reference key="1">
    <citation type="journal article" date="2009" name="PLoS Genet.">
        <title>Organised genome dynamics in the Escherichia coli species results in highly diverse adaptive paths.</title>
        <authorList>
            <person name="Touchon M."/>
            <person name="Hoede C."/>
            <person name="Tenaillon O."/>
            <person name="Barbe V."/>
            <person name="Baeriswyl S."/>
            <person name="Bidet P."/>
            <person name="Bingen E."/>
            <person name="Bonacorsi S."/>
            <person name="Bouchier C."/>
            <person name="Bouvet O."/>
            <person name="Calteau A."/>
            <person name="Chiapello H."/>
            <person name="Clermont O."/>
            <person name="Cruveiller S."/>
            <person name="Danchin A."/>
            <person name="Diard M."/>
            <person name="Dossat C."/>
            <person name="Karoui M.E."/>
            <person name="Frapy E."/>
            <person name="Garry L."/>
            <person name="Ghigo J.M."/>
            <person name="Gilles A.M."/>
            <person name="Johnson J."/>
            <person name="Le Bouguenec C."/>
            <person name="Lescat M."/>
            <person name="Mangenot S."/>
            <person name="Martinez-Jehanne V."/>
            <person name="Matic I."/>
            <person name="Nassif X."/>
            <person name="Oztas S."/>
            <person name="Petit M.A."/>
            <person name="Pichon C."/>
            <person name="Rouy Z."/>
            <person name="Ruf C.S."/>
            <person name="Schneider D."/>
            <person name="Tourret J."/>
            <person name="Vacherie B."/>
            <person name="Vallenet D."/>
            <person name="Medigue C."/>
            <person name="Rocha E.P.C."/>
            <person name="Denamur E."/>
        </authorList>
    </citation>
    <scope>NUCLEOTIDE SEQUENCE [LARGE SCALE GENOMIC DNA]</scope>
    <source>
        <strain>S88 / ExPEC</strain>
    </source>
</reference>
<proteinExistence type="evidence at transcript level"/>
<accession>B7ME88</accession>
<feature type="chain" id="PRO_1000145666" description="Multidrug resistance protein MdtC">
    <location>
        <begin position="1"/>
        <end position="1025"/>
    </location>
</feature>
<feature type="transmembrane region" description="Helical" evidence="1">
    <location>
        <begin position="3"/>
        <end position="23"/>
    </location>
</feature>
<feature type="transmembrane region" description="Helical" evidence="1">
    <location>
        <begin position="333"/>
        <end position="353"/>
    </location>
</feature>
<feature type="transmembrane region" description="Helical" evidence="1">
    <location>
        <begin position="360"/>
        <end position="380"/>
    </location>
</feature>
<feature type="transmembrane region" description="Helical" evidence="1">
    <location>
        <begin position="387"/>
        <end position="407"/>
    </location>
</feature>
<feature type="transmembrane region" description="Helical" evidence="1">
    <location>
        <begin position="431"/>
        <end position="451"/>
    </location>
</feature>
<feature type="transmembrane region" description="Helical" evidence="1">
    <location>
        <begin position="463"/>
        <end position="483"/>
    </location>
</feature>
<feature type="transmembrane region" description="Helical" evidence="1">
    <location>
        <begin position="528"/>
        <end position="548"/>
    </location>
</feature>
<feature type="transmembrane region" description="Helical" evidence="1">
    <location>
        <begin position="853"/>
        <end position="873"/>
    </location>
</feature>
<feature type="transmembrane region" description="Helical" evidence="1">
    <location>
        <begin position="875"/>
        <end position="895"/>
    </location>
</feature>
<feature type="transmembrane region" description="Helical" evidence="1">
    <location>
        <begin position="897"/>
        <end position="917"/>
    </location>
</feature>
<feature type="transmembrane region" description="Helical" evidence="1">
    <location>
        <begin position="953"/>
        <end position="973"/>
    </location>
</feature>
<feature type="transmembrane region" description="Helical" evidence="1">
    <location>
        <begin position="984"/>
        <end position="1004"/>
    </location>
</feature>
<keyword id="KW-0997">Cell inner membrane</keyword>
<keyword id="KW-1003">Cell membrane</keyword>
<keyword id="KW-0472">Membrane</keyword>
<keyword id="KW-1185">Reference proteome</keyword>
<keyword id="KW-0812">Transmembrane</keyword>
<keyword id="KW-1133">Transmembrane helix</keyword>
<keyword id="KW-0813">Transport</keyword>
<protein>
    <recommendedName>
        <fullName evidence="1">Multidrug resistance protein MdtC</fullName>
    </recommendedName>
    <alternativeName>
        <fullName evidence="1">Multidrug transporter MdtC</fullName>
    </alternativeName>
</protein>